<gene>
    <name type="primary">fli-1</name>
    <name type="ORF">B0523.5</name>
</gene>
<accession>P34268</accession>
<accession>P90739</accession>
<accession>Q17331</accession>
<feature type="chain" id="PRO_0000218752" description="Protein flightless-1 homolog">
    <location>
        <begin position="1"/>
        <end position="1257"/>
    </location>
</feature>
<feature type="repeat" description="LRR 1" evidence="2">
    <location>
        <begin position="6"/>
        <end position="31"/>
    </location>
</feature>
<feature type="repeat" description="LRR 2" evidence="2">
    <location>
        <begin position="32"/>
        <end position="54"/>
    </location>
</feature>
<feature type="repeat" description="LRR 3" evidence="2">
    <location>
        <begin position="56"/>
        <end position="77"/>
    </location>
</feature>
<feature type="repeat" description="LRR 4" evidence="2">
    <location>
        <begin position="78"/>
        <end position="102"/>
    </location>
</feature>
<feature type="repeat" description="LRR 5" evidence="2">
    <location>
        <begin position="103"/>
        <end position="126"/>
    </location>
</feature>
<feature type="repeat" description="LRR 6" evidence="2">
    <location>
        <begin position="128"/>
        <end position="148"/>
    </location>
</feature>
<feature type="repeat" description="LRR 7" evidence="2">
    <location>
        <begin position="149"/>
        <end position="172"/>
    </location>
</feature>
<feature type="repeat" description="LRR 8" evidence="2">
    <location>
        <begin position="174"/>
        <end position="195"/>
    </location>
</feature>
<feature type="repeat" description="LRR 9" evidence="2">
    <location>
        <begin position="197"/>
        <end position="221"/>
    </location>
</feature>
<feature type="repeat" description="LRR 10" evidence="2">
    <location>
        <begin position="222"/>
        <end position="244"/>
    </location>
</feature>
<feature type="repeat" description="LRR 11" evidence="2">
    <location>
        <begin position="246"/>
        <end position="267"/>
    </location>
</feature>
<feature type="repeat" description="LRR 12" evidence="2">
    <location>
        <begin position="268"/>
        <end position="290"/>
    </location>
</feature>
<feature type="repeat" description="LRR 13" evidence="2">
    <location>
        <begin position="292"/>
        <end position="315"/>
    </location>
</feature>
<feature type="repeat" description="LRR 14" evidence="2">
    <location>
        <begin position="316"/>
        <end position="338"/>
    </location>
</feature>
<feature type="repeat" description="LRR 15" evidence="2">
    <location>
        <begin position="339"/>
        <end position="361"/>
    </location>
</feature>
<feature type="repeat" description="LRR 16" evidence="2">
    <location>
        <begin position="363"/>
        <end position="384"/>
    </location>
</feature>
<feature type="repeat" description="Gelsolin-like 1" evidence="2">
    <location>
        <begin position="523"/>
        <end position="600"/>
    </location>
</feature>
<feature type="repeat" description="Gelsolin-like 2" evidence="2">
    <location>
        <begin position="640"/>
        <end position="714"/>
    </location>
</feature>
<feature type="repeat" description="Gelsolin-like 3" evidence="2">
    <location>
        <begin position="759"/>
        <end position="832"/>
    </location>
</feature>
<feature type="repeat" description="Gelsolin-like 4" evidence="2">
    <location>
        <begin position="1168"/>
        <end position="1243"/>
    </location>
</feature>
<name>FLII_CAEEL</name>
<keyword id="KW-0217">Developmental protein</keyword>
<keyword id="KW-0433">Leucine-rich repeat</keyword>
<keyword id="KW-1185">Reference proteome</keyword>
<keyword id="KW-0677">Repeat</keyword>
<organism>
    <name type="scientific">Caenorhabditis elegans</name>
    <dbReference type="NCBI Taxonomy" id="6239"/>
    <lineage>
        <taxon>Eukaryota</taxon>
        <taxon>Metazoa</taxon>
        <taxon>Ecdysozoa</taxon>
        <taxon>Nematoda</taxon>
        <taxon>Chromadorea</taxon>
        <taxon>Rhabditida</taxon>
        <taxon>Rhabditina</taxon>
        <taxon>Rhabditomorpha</taxon>
        <taxon>Rhabditoidea</taxon>
        <taxon>Rhabditidae</taxon>
        <taxon>Peloderinae</taxon>
        <taxon>Caenorhabditis</taxon>
    </lineage>
</organism>
<sequence>MSTGVLQFVKGIDFSGNDFSGDRFPHDVEQMTQMTWLKLNDSKLEQVPDELSRCANLEHLQMAHNQLISVHGELSDLPRLRSVIVRDNNLKTAGIPTDIFRMKDLTIIDLSRNQLREVPTNLEYAKGSIVLNLSYNNIETIPNSVCANLIDLLFLDLSNNKLDMLPPQIRRLSMLQSLKLSNNPLNHFQLKQLPSMTSLSVLHMSNTNRTLDNIPPTLDDMHNLRDVDFSENNLPIVPEALFKLRNLRKLNLSGNKIEKLNMTEGEWENLETLNMSHNQLTVLPDCVVKLTRLTKLYAANNQLTFEGIPSGIGKLIQLTVLHLSYNKLELVPEGISRCVKLQKLKLDHNRLITLPEGIHLLPDLKVLDLHENENLVMPPKPNDARKKLAFYNIDFSLEHQRKIAGQMTSPSSSISSVHSGGARQDALARRKEFIRRRKQQADQQSADKVIQGMSKIAGVGAALTEKQQEEEERQLEAKSAVNWKKNIEKNRRHIDYSDIFDEDVGSDEGMWVWEIENFYPSIMDEAFHGQFYDADAYLVLKTTREASGQLRHAIFYWLGEHASLDKGMCSAVHAVGLRNHLNATCRTQREEMNDETEEFLTLFGEEIVYIEGGRTISGFYTTEKPAHLTRLYRAGVNGTAVEMEPVPLSVESLDPRFCFLLDAGETIWIWSGYKSRITVSNKARLFAERLNKRDRKGKSEIETCRQARCPPEFWQALTGNPDKPQGAIVEHVPEGFVAERKKLYKVNIGMGFLELPQVELPKGIAKQDMLGSKGVFVLDSNSDIFLWIGKKANRLLKMAGQKLVVELHQMIDRPDYAQVYRETEGEESMMFRSKFAGWDEIVPVDYTRTSDSVQRVPDLKVIVKKDNMMRADLAALFLERQPSMSYEESEELMEDCNYDLELMESFVLEGKKFVKLPQKEFGIFYTMDCYVFLCRYAVMPEEDEEGEDEHDEDDKPEMDFKCVVYFWQGRDASNMGWLNFTFQLQPNFEEIFKDKLEVVRMYQQQENHKFLSHFKRKFLIKRGRRGLTKNLGGKWPELFQMRANGSSVCNRTIQVDCQANQLCSAFCHMLRIPFKEIEEDGHRGVVYVWMGKDSDPREHEFARQVASDLVVRDDDNDFRIVEVQEGEENEEFWKVLGGKKKYETDSSFVKHTRLFRCTNEKGYFAISEKTVDFCQDDLDDDDIMILDNGDAVFLWIGARSSDIEAKLSYQAAQVYHASMRMKANEKPRKFMLAVRGRESCRFRKCFHAWSKMKEPMG</sequence>
<evidence type="ECO:0000250" key="1"/>
<evidence type="ECO:0000255" key="2"/>
<evidence type="ECO:0000305" key="3"/>
<reference key="1">
    <citation type="journal article" date="1993" name="Proc. Natl. Acad. Sci. U.S.A.">
        <title>The Drosophila melanogaster flightless-I gene involved in gastrulation and muscle degeneration encodes gelsolin-like and leucine-rich repeat domains and is conserved in Caenorhabditis elegans and humans.</title>
        <authorList>
            <person name="Campbell H.D."/>
            <person name="Schimansky T."/>
            <person name="Claudianos C."/>
            <person name="Ozsarac N."/>
            <person name="Kasprzak A.B."/>
            <person name="Cotsell J.N."/>
            <person name="Young I.G."/>
            <person name="de Couet H.G."/>
            <person name="Miklos G.L.G."/>
        </authorList>
    </citation>
    <scope>NUCLEOTIDE SEQUENCE [MRNA]</scope>
</reference>
<reference key="2">
    <citation type="journal article" date="1994" name="Nature">
        <title>2.2 Mb of contiguous nucleotide sequence from chromosome III of C. elegans.</title>
        <authorList>
            <person name="Wilson R."/>
            <person name="Ainscough R."/>
            <person name="Anderson K."/>
            <person name="Baynes C."/>
            <person name="Berks M."/>
            <person name="Bonfield J."/>
            <person name="Burton J."/>
            <person name="Connell M."/>
            <person name="Copsey T."/>
            <person name="Cooper J."/>
            <person name="Coulson A."/>
            <person name="Craxton M."/>
            <person name="Dear S."/>
            <person name="Du Z."/>
            <person name="Durbin R."/>
            <person name="Favello A."/>
            <person name="Fraser A."/>
            <person name="Fulton L."/>
            <person name="Gardner A."/>
            <person name="Green P."/>
            <person name="Hawkins T."/>
            <person name="Hillier L."/>
            <person name="Jier M."/>
            <person name="Johnston L."/>
            <person name="Jones M."/>
            <person name="Kershaw J."/>
            <person name="Kirsten J."/>
            <person name="Laisster N."/>
            <person name="Latreille P."/>
            <person name="Lightning J."/>
            <person name="Lloyd C."/>
            <person name="Mortimore B."/>
            <person name="O'Callaghan M."/>
            <person name="Parsons J."/>
            <person name="Percy C."/>
            <person name="Rifken L."/>
            <person name="Roopra A."/>
            <person name="Saunders D."/>
            <person name="Shownkeen R."/>
            <person name="Sims M."/>
            <person name="Smaldon N."/>
            <person name="Smith A."/>
            <person name="Smith M."/>
            <person name="Sonnhammer E."/>
            <person name="Staden R."/>
            <person name="Sulston J."/>
            <person name="Thierry-Mieg J."/>
            <person name="Thomas K."/>
            <person name="Vaudin M."/>
            <person name="Vaughan K."/>
            <person name="Waterston R."/>
            <person name="Watson A."/>
            <person name="Weinstock L."/>
            <person name="Wilkinson-Sproat J."/>
            <person name="Wohldman P."/>
        </authorList>
    </citation>
    <scope>NUCLEOTIDE SEQUENCE [LARGE SCALE GENOMIC DNA]</scope>
    <source>
        <strain>Bristol N2</strain>
    </source>
</reference>
<reference key="3">
    <citation type="journal article" date="1998" name="Science">
        <title>Genome sequence of the nematode C. elegans: a platform for investigating biology.</title>
        <authorList>
            <consortium name="The C. elegans sequencing consortium"/>
        </authorList>
    </citation>
    <scope>NUCLEOTIDE SEQUENCE [LARGE SCALE GENOMIC DNA]</scope>
    <source>
        <strain>Bristol N2</strain>
    </source>
</reference>
<proteinExistence type="evidence at transcript level"/>
<comment type="function">
    <text evidence="1">May play a key role in embryonic cellularization by interacting with both the cytoskeleton and other cellular components.</text>
</comment>
<comment type="similarity">
    <text evidence="3">Belongs to the villin/gelsolin family.</text>
</comment>
<dbReference type="EMBL" id="U01183">
    <property type="protein sequence ID" value="AAC03567.1"/>
    <property type="molecule type" value="mRNA"/>
</dbReference>
<dbReference type="EMBL" id="FO080165">
    <property type="protein sequence ID" value="CCD61730.1"/>
    <property type="molecule type" value="Genomic_DNA"/>
</dbReference>
<dbReference type="PIR" id="A88536">
    <property type="entry name" value="A88536"/>
</dbReference>
<dbReference type="PIR" id="S27783">
    <property type="entry name" value="S27783"/>
</dbReference>
<dbReference type="RefSeq" id="NP_498913.2">
    <property type="nucleotide sequence ID" value="NM_066512.5"/>
</dbReference>
<dbReference type="SMR" id="P34268"/>
<dbReference type="FunCoup" id="P34268">
    <property type="interactions" value="2518"/>
</dbReference>
<dbReference type="STRING" id="6239.B0523.5.1"/>
<dbReference type="PaxDb" id="6239-B0523.5"/>
<dbReference type="PeptideAtlas" id="P34268"/>
<dbReference type="EnsemblMetazoa" id="B0523.5.1">
    <property type="protein sequence ID" value="B0523.5.1"/>
    <property type="gene ID" value="WBGene00001443"/>
</dbReference>
<dbReference type="GeneID" id="176215"/>
<dbReference type="KEGG" id="cel:CELE_B0523.5"/>
<dbReference type="UCSC" id="B0523.5">
    <property type="organism name" value="c. elegans"/>
</dbReference>
<dbReference type="AGR" id="WB:WBGene00001443"/>
<dbReference type="CTD" id="176215"/>
<dbReference type="WormBase" id="B0523.5">
    <property type="protein sequence ID" value="CE36522"/>
    <property type="gene ID" value="WBGene00001443"/>
    <property type="gene designation" value="fli-1"/>
</dbReference>
<dbReference type="eggNOG" id="KOG0444">
    <property type="taxonomic scope" value="Eukaryota"/>
</dbReference>
<dbReference type="GeneTree" id="ENSGT00940000156643"/>
<dbReference type="HOGENOM" id="CLU_002568_1_0_1"/>
<dbReference type="InParanoid" id="P34268"/>
<dbReference type="OMA" id="CFHGWSA"/>
<dbReference type="OrthoDB" id="20529at2759"/>
<dbReference type="PhylomeDB" id="P34268"/>
<dbReference type="PRO" id="PR:P34268"/>
<dbReference type="Proteomes" id="UP000001940">
    <property type="component" value="Chromosome III"/>
</dbReference>
<dbReference type="Bgee" id="WBGene00001443">
    <property type="expression patterns" value="Expressed in germ line (C elegans) and 4 other cell types or tissues"/>
</dbReference>
<dbReference type="GO" id="GO:0015629">
    <property type="term" value="C:actin cytoskeleton"/>
    <property type="evidence" value="ECO:0000318"/>
    <property type="project" value="GO_Central"/>
</dbReference>
<dbReference type="GO" id="GO:0005737">
    <property type="term" value="C:cytoplasm"/>
    <property type="evidence" value="ECO:0000318"/>
    <property type="project" value="GO_Central"/>
</dbReference>
<dbReference type="GO" id="GO:0005634">
    <property type="term" value="C:nucleus"/>
    <property type="evidence" value="ECO:0000314"/>
    <property type="project" value="WormBase"/>
</dbReference>
<dbReference type="GO" id="GO:0051015">
    <property type="term" value="F:actin filament binding"/>
    <property type="evidence" value="ECO:0000318"/>
    <property type="project" value="GO_Central"/>
</dbReference>
<dbReference type="GO" id="GO:0005546">
    <property type="term" value="F:phosphatidylinositol-4,5-bisphosphate binding"/>
    <property type="evidence" value="ECO:0000318"/>
    <property type="project" value="GO_Central"/>
</dbReference>
<dbReference type="GO" id="GO:0051014">
    <property type="term" value="P:actin filament severing"/>
    <property type="evidence" value="ECO:0000318"/>
    <property type="project" value="GO_Central"/>
</dbReference>
<dbReference type="GO" id="GO:0008154">
    <property type="term" value="P:actin polymerization or depolymerization"/>
    <property type="evidence" value="ECO:0000318"/>
    <property type="project" value="GO_Central"/>
</dbReference>
<dbReference type="GO" id="GO:0051016">
    <property type="term" value="P:barbed-end actin filament capping"/>
    <property type="evidence" value="ECO:0000318"/>
    <property type="project" value="GO_Central"/>
</dbReference>
<dbReference type="GO" id="GO:0030239">
    <property type="term" value="P:myofibril assembly"/>
    <property type="evidence" value="ECO:0000318"/>
    <property type="project" value="GO_Central"/>
</dbReference>
<dbReference type="CDD" id="cd11280">
    <property type="entry name" value="gelsolin_like"/>
    <property type="match status" value="2"/>
</dbReference>
<dbReference type="CDD" id="cd11290">
    <property type="entry name" value="gelsolin_S1_like"/>
    <property type="match status" value="1"/>
</dbReference>
<dbReference type="CDD" id="cd11292">
    <property type="entry name" value="gelsolin_S3_like"/>
    <property type="match status" value="1"/>
</dbReference>
<dbReference type="CDD" id="cd11288">
    <property type="entry name" value="gelsolin_S5_like"/>
    <property type="match status" value="1"/>
</dbReference>
<dbReference type="FunFam" id="3.80.10.10:FF:000033">
    <property type="entry name" value="FLII, actin remodeling protein"/>
    <property type="match status" value="1"/>
</dbReference>
<dbReference type="FunFam" id="3.80.10.10:FF:000050">
    <property type="entry name" value="FLII, actin remodeling protein"/>
    <property type="match status" value="1"/>
</dbReference>
<dbReference type="FunFam" id="3.80.10.10:FF:000054">
    <property type="entry name" value="FLII, actin remodeling protein"/>
    <property type="match status" value="1"/>
</dbReference>
<dbReference type="FunFam" id="3.40.20.10:FF:000031">
    <property type="entry name" value="protein flightless-1 homolog isoform X1"/>
    <property type="match status" value="1"/>
</dbReference>
<dbReference type="FunFam" id="3.40.20.10:FF:000034">
    <property type="entry name" value="protein flightless-1 homolog isoform X1"/>
    <property type="match status" value="1"/>
</dbReference>
<dbReference type="Gene3D" id="3.80.10.10">
    <property type="entry name" value="Ribonuclease Inhibitor"/>
    <property type="match status" value="3"/>
</dbReference>
<dbReference type="Gene3D" id="3.40.20.10">
    <property type="entry name" value="Severin"/>
    <property type="match status" value="6"/>
</dbReference>
<dbReference type="InterPro" id="IPR029006">
    <property type="entry name" value="ADF-H/Gelsolin-like_dom_sf"/>
</dbReference>
<dbReference type="InterPro" id="IPR007123">
    <property type="entry name" value="Gelsolin-like_dom"/>
</dbReference>
<dbReference type="InterPro" id="IPR001611">
    <property type="entry name" value="Leu-rich_rpt"/>
</dbReference>
<dbReference type="InterPro" id="IPR025875">
    <property type="entry name" value="Leu-rich_rpt_4"/>
</dbReference>
<dbReference type="InterPro" id="IPR003591">
    <property type="entry name" value="Leu-rich_rpt_typical-subtyp"/>
</dbReference>
<dbReference type="InterPro" id="IPR032675">
    <property type="entry name" value="LRR_dom_sf"/>
</dbReference>
<dbReference type="InterPro" id="IPR007122">
    <property type="entry name" value="Villin/Gelsolin"/>
</dbReference>
<dbReference type="PANTHER" id="PTHR11977:SF51">
    <property type="entry name" value="PROTEIN FLIGHTLESS-1 HOMOLOG"/>
    <property type="match status" value="1"/>
</dbReference>
<dbReference type="PANTHER" id="PTHR11977">
    <property type="entry name" value="VILLIN"/>
    <property type="match status" value="1"/>
</dbReference>
<dbReference type="Pfam" id="PF00626">
    <property type="entry name" value="Gelsolin"/>
    <property type="match status" value="4"/>
</dbReference>
<dbReference type="Pfam" id="PF12799">
    <property type="entry name" value="LRR_4"/>
    <property type="match status" value="1"/>
</dbReference>
<dbReference type="Pfam" id="PF13855">
    <property type="entry name" value="LRR_8"/>
    <property type="match status" value="3"/>
</dbReference>
<dbReference type="PRINTS" id="PR00597">
    <property type="entry name" value="GELSOLIN"/>
</dbReference>
<dbReference type="SMART" id="SM00262">
    <property type="entry name" value="GEL"/>
    <property type="match status" value="6"/>
</dbReference>
<dbReference type="SMART" id="SM00364">
    <property type="entry name" value="LRR_BAC"/>
    <property type="match status" value="4"/>
</dbReference>
<dbReference type="SMART" id="SM00369">
    <property type="entry name" value="LRR_TYP"/>
    <property type="match status" value="11"/>
</dbReference>
<dbReference type="SUPFAM" id="SSF55753">
    <property type="entry name" value="Actin depolymerizing proteins"/>
    <property type="match status" value="6"/>
</dbReference>
<dbReference type="SUPFAM" id="SSF52058">
    <property type="entry name" value="L domain-like"/>
    <property type="match status" value="2"/>
</dbReference>
<dbReference type="PROSITE" id="PS51450">
    <property type="entry name" value="LRR"/>
    <property type="match status" value="10"/>
</dbReference>
<protein>
    <recommendedName>
        <fullName>Protein flightless-1 homolog</fullName>
    </recommendedName>
</protein>